<organism>
    <name type="scientific">Bacillus cereus (strain ZK / E33L)</name>
    <dbReference type="NCBI Taxonomy" id="288681"/>
    <lineage>
        <taxon>Bacteria</taxon>
        <taxon>Bacillati</taxon>
        <taxon>Bacillota</taxon>
        <taxon>Bacilli</taxon>
        <taxon>Bacillales</taxon>
        <taxon>Bacillaceae</taxon>
        <taxon>Bacillus</taxon>
        <taxon>Bacillus cereus group</taxon>
    </lineage>
</organism>
<gene>
    <name type="ordered locus">BCE33L4233</name>
</gene>
<accession>Q633V5</accession>
<keyword id="KW-0378">Hydrolase</keyword>
<keyword id="KW-0460">Magnesium</keyword>
<keyword id="KW-0479">Metal-binding</keyword>
<keyword id="KW-0546">Nucleotide metabolism</keyword>
<keyword id="KW-0547">Nucleotide-binding</keyword>
<proteinExistence type="inferred from homology"/>
<name>IXTPA_BACCZ</name>
<reference key="1">
    <citation type="journal article" date="2006" name="J. Bacteriol.">
        <title>Pathogenomic sequence analysis of Bacillus cereus and Bacillus thuringiensis isolates closely related to Bacillus anthracis.</title>
        <authorList>
            <person name="Han C.S."/>
            <person name="Xie G."/>
            <person name="Challacombe J.F."/>
            <person name="Altherr M.R."/>
            <person name="Bhotika S.S."/>
            <person name="Bruce D."/>
            <person name="Campbell C.S."/>
            <person name="Campbell M.L."/>
            <person name="Chen J."/>
            <person name="Chertkov O."/>
            <person name="Cleland C."/>
            <person name="Dimitrijevic M."/>
            <person name="Doggett N.A."/>
            <person name="Fawcett J.J."/>
            <person name="Glavina T."/>
            <person name="Goodwin L.A."/>
            <person name="Hill K.K."/>
            <person name="Hitchcock P."/>
            <person name="Jackson P.J."/>
            <person name="Keim P."/>
            <person name="Kewalramani A.R."/>
            <person name="Longmire J."/>
            <person name="Lucas S."/>
            <person name="Malfatti S."/>
            <person name="McMurry K."/>
            <person name="Meincke L.J."/>
            <person name="Misra M."/>
            <person name="Moseman B.L."/>
            <person name="Mundt M."/>
            <person name="Munk A.C."/>
            <person name="Okinaka R.T."/>
            <person name="Parson-Quintana B."/>
            <person name="Reilly L.P."/>
            <person name="Richardson P."/>
            <person name="Robinson D.L."/>
            <person name="Rubin E."/>
            <person name="Saunders E."/>
            <person name="Tapia R."/>
            <person name="Tesmer J.G."/>
            <person name="Thayer N."/>
            <person name="Thompson L.S."/>
            <person name="Tice H."/>
            <person name="Ticknor L.O."/>
            <person name="Wills P.L."/>
            <person name="Brettin T.S."/>
            <person name="Gilna P."/>
        </authorList>
    </citation>
    <scope>NUCLEOTIDE SEQUENCE [LARGE SCALE GENOMIC DNA]</scope>
    <source>
        <strain>ZK / E33L</strain>
    </source>
</reference>
<protein>
    <recommendedName>
        <fullName evidence="1">dITP/XTP pyrophosphatase</fullName>
        <ecNumber evidence="1">3.6.1.66</ecNumber>
    </recommendedName>
    <alternativeName>
        <fullName evidence="1">Non-canonical purine NTP pyrophosphatase</fullName>
    </alternativeName>
    <alternativeName>
        <fullName evidence="1">Non-standard purine NTP pyrophosphatase</fullName>
    </alternativeName>
    <alternativeName>
        <fullName evidence="1">Nucleoside-triphosphate diphosphatase</fullName>
    </alternativeName>
    <alternativeName>
        <fullName evidence="1">Nucleoside-triphosphate pyrophosphatase</fullName>
        <shortName evidence="1">NTPase</shortName>
    </alternativeName>
</protein>
<sequence>MENMKQVVVATKNMGKVREFAELFERFDLEVKSLHDFPHIEEVEETGETFEENAILKADSLSRQLNAIVIADDSGLIVDALNGKPGVYSARFAGEPKDDQANIDKVLQELNEVAFEKRKARFYCALAVAFPEGDKKPVIVNGTCEGFILEQRRGENGFGYDPIFYVEEYKKAMAELSSDEKNAISHRGRALRKLEEKIPEWFLGE</sequence>
<feature type="chain" id="PRO_0000178122" description="dITP/XTP pyrophosphatase">
    <location>
        <begin position="1"/>
        <end position="205"/>
    </location>
</feature>
<feature type="active site" description="Proton acceptor" evidence="1">
    <location>
        <position position="73"/>
    </location>
</feature>
<feature type="binding site" evidence="1">
    <location>
        <begin position="11"/>
        <end position="16"/>
    </location>
    <ligand>
        <name>substrate</name>
    </ligand>
</feature>
<feature type="binding site" evidence="1">
    <location>
        <position position="44"/>
    </location>
    <ligand>
        <name>Mg(2+)</name>
        <dbReference type="ChEBI" id="CHEBI:18420"/>
    </ligand>
</feature>
<feature type="binding site" evidence="1">
    <location>
        <position position="73"/>
    </location>
    <ligand>
        <name>Mg(2+)</name>
        <dbReference type="ChEBI" id="CHEBI:18420"/>
    </ligand>
</feature>
<feature type="binding site" evidence="1">
    <location>
        <position position="74"/>
    </location>
    <ligand>
        <name>substrate</name>
    </ligand>
</feature>
<feature type="binding site" evidence="1">
    <location>
        <begin position="158"/>
        <end position="161"/>
    </location>
    <ligand>
        <name>substrate</name>
    </ligand>
</feature>
<feature type="binding site" evidence="1">
    <location>
        <position position="181"/>
    </location>
    <ligand>
        <name>substrate</name>
    </ligand>
</feature>
<feature type="binding site" evidence="1">
    <location>
        <begin position="186"/>
        <end position="187"/>
    </location>
    <ligand>
        <name>substrate</name>
    </ligand>
</feature>
<dbReference type="EC" id="3.6.1.66" evidence="1"/>
<dbReference type="EMBL" id="CP000001">
    <property type="protein sequence ID" value="AAU16035.1"/>
    <property type="molecule type" value="Genomic_DNA"/>
</dbReference>
<dbReference type="SMR" id="Q633V5"/>
<dbReference type="KEGG" id="bcz:BCE33L4233"/>
<dbReference type="Proteomes" id="UP000002612">
    <property type="component" value="Chromosome"/>
</dbReference>
<dbReference type="GO" id="GO:0005829">
    <property type="term" value="C:cytosol"/>
    <property type="evidence" value="ECO:0007669"/>
    <property type="project" value="TreeGrafter"/>
</dbReference>
<dbReference type="GO" id="GO:0035870">
    <property type="term" value="F:dITP diphosphatase activity"/>
    <property type="evidence" value="ECO:0007669"/>
    <property type="project" value="RHEA"/>
</dbReference>
<dbReference type="GO" id="GO:0036220">
    <property type="term" value="F:ITP diphosphatase activity"/>
    <property type="evidence" value="ECO:0007669"/>
    <property type="project" value="UniProtKB-EC"/>
</dbReference>
<dbReference type="GO" id="GO:0046872">
    <property type="term" value="F:metal ion binding"/>
    <property type="evidence" value="ECO:0007669"/>
    <property type="project" value="UniProtKB-KW"/>
</dbReference>
<dbReference type="GO" id="GO:0000166">
    <property type="term" value="F:nucleotide binding"/>
    <property type="evidence" value="ECO:0007669"/>
    <property type="project" value="UniProtKB-KW"/>
</dbReference>
<dbReference type="GO" id="GO:0017111">
    <property type="term" value="F:ribonucleoside triphosphate phosphatase activity"/>
    <property type="evidence" value="ECO:0007669"/>
    <property type="project" value="InterPro"/>
</dbReference>
<dbReference type="GO" id="GO:0036222">
    <property type="term" value="F:XTP diphosphatase activity"/>
    <property type="evidence" value="ECO:0007669"/>
    <property type="project" value="RHEA"/>
</dbReference>
<dbReference type="GO" id="GO:0009117">
    <property type="term" value="P:nucleotide metabolic process"/>
    <property type="evidence" value="ECO:0007669"/>
    <property type="project" value="UniProtKB-KW"/>
</dbReference>
<dbReference type="GO" id="GO:0009146">
    <property type="term" value="P:purine nucleoside triphosphate catabolic process"/>
    <property type="evidence" value="ECO:0007669"/>
    <property type="project" value="UniProtKB-UniRule"/>
</dbReference>
<dbReference type="CDD" id="cd00515">
    <property type="entry name" value="HAM1"/>
    <property type="match status" value="1"/>
</dbReference>
<dbReference type="FunFam" id="3.90.950.10:FF:000001">
    <property type="entry name" value="dITP/XTP pyrophosphatase"/>
    <property type="match status" value="1"/>
</dbReference>
<dbReference type="Gene3D" id="3.90.950.10">
    <property type="match status" value="1"/>
</dbReference>
<dbReference type="HAMAP" id="MF_01405">
    <property type="entry name" value="Non_canon_purine_NTPase"/>
    <property type="match status" value="1"/>
</dbReference>
<dbReference type="InterPro" id="IPR020922">
    <property type="entry name" value="dITP/XTP_pyrophosphatase"/>
</dbReference>
<dbReference type="InterPro" id="IPR029001">
    <property type="entry name" value="ITPase-like_fam"/>
</dbReference>
<dbReference type="InterPro" id="IPR002637">
    <property type="entry name" value="RdgB/HAM1"/>
</dbReference>
<dbReference type="NCBIfam" id="NF011397">
    <property type="entry name" value="PRK14822.1"/>
    <property type="match status" value="1"/>
</dbReference>
<dbReference type="NCBIfam" id="TIGR00042">
    <property type="entry name" value="RdgB/HAM1 family non-canonical purine NTP pyrophosphatase"/>
    <property type="match status" value="1"/>
</dbReference>
<dbReference type="PANTHER" id="PTHR11067:SF9">
    <property type="entry name" value="INOSINE TRIPHOSPHATE PYROPHOSPHATASE"/>
    <property type="match status" value="1"/>
</dbReference>
<dbReference type="PANTHER" id="PTHR11067">
    <property type="entry name" value="INOSINE TRIPHOSPHATE PYROPHOSPHATASE/HAM1 PROTEIN"/>
    <property type="match status" value="1"/>
</dbReference>
<dbReference type="Pfam" id="PF01725">
    <property type="entry name" value="Ham1p_like"/>
    <property type="match status" value="1"/>
</dbReference>
<dbReference type="SUPFAM" id="SSF52972">
    <property type="entry name" value="ITPase-like"/>
    <property type="match status" value="1"/>
</dbReference>
<comment type="function">
    <text evidence="1">Pyrophosphatase that catalyzes the hydrolysis of nucleoside triphosphates to their monophosphate derivatives, with a high preference for the non-canonical purine nucleotides XTP (xanthosine triphosphate), dITP (deoxyinosine triphosphate) and ITP. Seems to function as a house-cleaning enzyme that removes non-canonical purine nucleotides from the nucleotide pool, thus preventing their incorporation into DNA/RNA and avoiding chromosomal lesions.</text>
</comment>
<comment type="catalytic activity">
    <reaction evidence="1">
        <text>XTP + H2O = XMP + diphosphate + H(+)</text>
        <dbReference type="Rhea" id="RHEA:28610"/>
        <dbReference type="ChEBI" id="CHEBI:15377"/>
        <dbReference type="ChEBI" id="CHEBI:15378"/>
        <dbReference type="ChEBI" id="CHEBI:33019"/>
        <dbReference type="ChEBI" id="CHEBI:57464"/>
        <dbReference type="ChEBI" id="CHEBI:61314"/>
        <dbReference type="EC" id="3.6.1.66"/>
    </reaction>
</comment>
<comment type="catalytic activity">
    <reaction evidence="1">
        <text>dITP + H2O = dIMP + diphosphate + H(+)</text>
        <dbReference type="Rhea" id="RHEA:28342"/>
        <dbReference type="ChEBI" id="CHEBI:15377"/>
        <dbReference type="ChEBI" id="CHEBI:15378"/>
        <dbReference type="ChEBI" id="CHEBI:33019"/>
        <dbReference type="ChEBI" id="CHEBI:61194"/>
        <dbReference type="ChEBI" id="CHEBI:61382"/>
        <dbReference type="EC" id="3.6.1.66"/>
    </reaction>
</comment>
<comment type="catalytic activity">
    <reaction evidence="1">
        <text>ITP + H2O = IMP + diphosphate + H(+)</text>
        <dbReference type="Rhea" id="RHEA:29399"/>
        <dbReference type="ChEBI" id="CHEBI:15377"/>
        <dbReference type="ChEBI" id="CHEBI:15378"/>
        <dbReference type="ChEBI" id="CHEBI:33019"/>
        <dbReference type="ChEBI" id="CHEBI:58053"/>
        <dbReference type="ChEBI" id="CHEBI:61402"/>
        <dbReference type="EC" id="3.6.1.66"/>
    </reaction>
</comment>
<comment type="cofactor">
    <cofactor evidence="1">
        <name>Mg(2+)</name>
        <dbReference type="ChEBI" id="CHEBI:18420"/>
    </cofactor>
    <text evidence="1">Binds 1 Mg(2+) ion per subunit.</text>
</comment>
<comment type="subunit">
    <text evidence="1">Homodimer.</text>
</comment>
<comment type="similarity">
    <text evidence="1">Belongs to the HAM1 NTPase family.</text>
</comment>
<evidence type="ECO:0000255" key="1">
    <source>
        <dbReference type="HAMAP-Rule" id="MF_01405"/>
    </source>
</evidence>